<accession>Q9FIM4</accession>
<accession>A0MFQ4</accession>
<keyword id="KW-0238">DNA-binding</keyword>
<keyword id="KW-0539">Nucleus</keyword>
<keyword id="KW-1185">Reference proteome</keyword>
<keyword id="KW-0677">Repeat</keyword>
<keyword id="KW-0804">Transcription</keyword>
<keyword id="KW-0805">Transcription regulation</keyword>
<protein>
    <recommendedName>
        <fullName evidence="4">Transcription factor MYB119</fullName>
    </recommendedName>
    <alternativeName>
        <fullName evidence="4">Myb-related protein 119</fullName>
        <shortName evidence="4">AtMYB119</shortName>
    </alternativeName>
</protein>
<organism>
    <name type="scientific">Arabidopsis thaliana</name>
    <name type="common">Mouse-ear cress</name>
    <dbReference type="NCBI Taxonomy" id="3702"/>
    <lineage>
        <taxon>Eukaryota</taxon>
        <taxon>Viridiplantae</taxon>
        <taxon>Streptophyta</taxon>
        <taxon>Embryophyta</taxon>
        <taxon>Tracheophyta</taxon>
        <taxon>Spermatophyta</taxon>
        <taxon>Magnoliopsida</taxon>
        <taxon>eudicotyledons</taxon>
        <taxon>Gunneridae</taxon>
        <taxon>Pentapetalae</taxon>
        <taxon>rosids</taxon>
        <taxon>malvids</taxon>
        <taxon>Brassicales</taxon>
        <taxon>Brassicaceae</taxon>
        <taxon>Camelineae</taxon>
        <taxon>Arabidopsis</taxon>
    </lineage>
</organism>
<dbReference type="EMBL" id="AF371978">
    <property type="protein sequence ID" value="AAK54741.1"/>
    <property type="molecule type" value="mRNA"/>
</dbReference>
<dbReference type="EMBL" id="AB016885">
    <property type="protein sequence ID" value="BAB09630.1"/>
    <property type="molecule type" value="Genomic_DNA"/>
</dbReference>
<dbReference type="EMBL" id="CP002688">
    <property type="protein sequence ID" value="AED97110.1"/>
    <property type="molecule type" value="Genomic_DNA"/>
</dbReference>
<dbReference type="EMBL" id="DQ447091">
    <property type="protein sequence ID" value="ABE66260.1"/>
    <property type="molecule type" value="mRNA"/>
</dbReference>
<dbReference type="EMBL" id="DQ653380">
    <property type="protein sequence ID" value="ABK28765.1"/>
    <property type="status" value="ALT_SEQ"/>
    <property type="molecule type" value="mRNA"/>
</dbReference>
<dbReference type="RefSeq" id="NP_568891.1">
    <property type="nucleotide sequence ID" value="NM_125275.2"/>
</dbReference>
<dbReference type="SMR" id="Q9FIM4"/>
<dbReference type="STRING" id="3702.Q9FIM4"/>
<dbReference type="iPTMnet" id="Q9FIM4"/>
<dbReference type="PaxDb" id="3702-AT5G58850.1"/>
<dbReference type="EnsemblPlants" id="AT5G58850.1">
    <property type="protein sequence ID" value="AT5G58850.1"/>
    <property type="gene ID" value="AT5G58850"/>
</dbReference>
<dbReference type="GeneID" id="836002"/>
<dbReference type="Gramene" id="AT5G58850.1">
    <property type="protein sequence ID" value="AT5G58850.1"/>
    <property type="gene ID" value="AT5G58850"/>
</dbReference>
<dbReference type="KEGG" id="ath:AT5G58850"/>
<dbReference type="Araport" id="AT5G58850"/>
<dbReference type="TAIR" id="AT5G58850">
    <property type="gene designation" value="MYB119"/>
</dbReference>
<dbReference type="eggNOG" id="KOG0048">
    <property type="taxonomic scope" value="Eukaryota"/>
</dbReference>
<dbReference type="HOGENOM" id="CLU_034700_1_0_1"/>
<dbReference type="InParanoid" id="Q9FIM4"/>
<dbReference type="OMA" id="HKSVWTH"/>
<dbReference type="OrthoDB" id="2143914at2759"/>
<dbReference type="PhylomeDB" id="Q9FIM4"/>
<dbReference type="PRO" id="PR:Q9FIM4"/>
<dbReference type="Proteomes" id="UP000006548">
    <property type="component" value="Chromosome 5"/>
</dbReference>
<dbReference type="ExpressionAtlas" id="Q9FIM4">
    <property type="expression patterns" value="baseline and differential"/>
</dbReference>
<dbReference type="GO" id="GO:0005634">
    <property type="term" value="C:nucleus"/>
    <property type="evidence" value="ECO:0007669"/>
    <property type="project" value="UniProtKB-SubCell"/>
</dbReference>
<dbReference type="GO" id="GO:0003677">
    <property type="term" value="F:DNA binding"/>
    <property type="evidence" value="ECO:0007669"/>
    <property type="project" value="UniProtKB-KW"/>
</dbReference>
<dbReference type="GO" id="GO:0003700">
    <property type="term" value="F:DNA-binding transcription factor activity"/>
    <property type="evidence" value="ECO:0000250"/>
    <property type="project" value="TAIR"/>
</dbReference>
<dbReference type="CDD" id="cd00167">
    <property type="entry name" value="SANT"/>
    <property type="match status" value="2"/>
</dbReference>
<dbReference type="FunFam" id="1.10.10.60:FF:000381">
    <property type="entry name" value="Transcription factor MYB119"/>
    <property type="match status" value="1"/>
</dbReference>
<dbReference type="FunFam" id="1.10.10.60:FF:000010">
    <property type="entry name" value="Transcriptional activator Myb isoform A"/>
    <property type="match status" value="1"/>
</dbReference>
<dbReference type="Gene3D" id="1.10.10.60">
    <property type="entry name" value="Homeodomain-like"/>
    <property type="match status" value="2"/>
</dbReference>
<dbReference type="InterPro" id="IPR009057">
    <property type="entry name" value="Homeodomain-like_sf"/>
</dbReference>
<dbReference type="InterPro" id="IPR017930">
    <property type="entry name" value="Myb_dom"/>
</dbReference>
<dbReference type="InterPro" id="IPR050560">
    <property type="entry name" value="MYB_TF"/>
</dbReference>
<dbReference type="InterPro" id="IPR001005">
    <property type="entry name" value="SANT/Myb"/>
</dbReference>
<dbReference type="PANTHER" id="PTHR45614">
    <property type="entry name" value="MYB PROTEIN-RELATED"/>
    <property type="match status" value="1"/>
</dbReference>
<dbReference type="PANTHER" id="PTHR45614:SF218">
    <property type="entry name" value="TRANSCRIPTION FACTOR MYB119-RELATED"/>
    <property type="match status" value="1"/>
</dbReference>
<dbReference type="Pfam" id="PF13921">
    <property type="entry name" value="Myb_DNA-bind_6"/>
    <property type="match status" value="1"/>
</dbReference>
<dbReference type="SMART" id="SM00717">
    <property type="entry name" value="SANT"/>
    <property type="match status" value="2"/>
</dbReference>
<dbReference type="SUPFAM" id="SSF46689">
    <property type="entry name" value="Homeodomain-like"/>
    <property type="match status" value="1"/>
</dbReference>
<dbReference type="PROSITE" id="PS51294">
    <property type="entry name" value="HTH_MYB"/>
    <property type="match status" value="2"/>
</dbReference>
<reference key="1">
    <citation type="journal article" date="2001" name="Curr. Opin. Plant Biol.">
        <title>The R2R3-MYB gene family in Arabidopsis thaliana.</title>
        <authorList>
            <person name="Stracke R."/>
            <person name="Werber M."/>
            <person name="Weisshaar B."/>
        </authorList>
    </citation>
    <scope>NUCLEOTIDE SEQUENCE [MRNA]</scope>
    <scope>GENE FAMILY</scope>
    <scope>NOMENCLATURE</scope>
    <source>
        <strain>cv. Columbia</strain>
    </source>
</reference>
<reference key="2">
    <citation type="journal article" date="1998" name="DNA Res.">
        <title>Structural analysis of Arabidopsis thaliana chromosome 5. VIII. Sequence features of the regions of 1,081,958 bp covered by seventeen physically assigned P1 and TAC clones.</title>
        <authorList>
            <person name="Asamizu E."/>
            <person name="Sato S."/>
            <person name="Kaneko T."/>
            <person name="Nakamura Y."/>
            <person name="Kotani H."/>
            <person name="Miyajima N."/>
            <person name="Tabata S."/>
        </authorList>
    </citation>
    <scope>NUCLEOTIDE SEQUENCE [LARGE SCALE GENOMIC DNA]</scope>
    <source>
        <strain>cv. Columbia</strain>
    </source>
</reference>
<reference key="3">
    <citation type="journal article" date="2017" name="Plant J.">
        <title>Araport11: a complete reannotation of the Arabidopsis thaliana reference genome.</title>
        <authorList>
            <person name="Cheng C.Y."/>
            <person name="Krishnakumar V."/>
            <person name="Chan A.P."/>
            <person name="Thibaud-Nissen F."/>
            <person name="Schobel S."/>
            <person name="Town C.D."/>
        </authorList>
    </citation>
    <scope>GENOME REANNOTATION</scope>
    <source>
        <strain>cv. Columbia</strain>
    </source>
</reference>
<reference key="4">
    <citation type="journal article" date="2006" name="Plant Biotechnol. J.">
        <title>Simultaneous high-throughput recombinational cloning of open reading frames in closed and open configurations.</title>
        <authorList>
            <person name="Underwood B.A."/>
            <person name="Vanderhaeghen R."/>
            <person name="Whitford R."/>
            <person name="Town C.D."/>
            <person name="Hilson P."/>
        </authorList>
    </citation>
    <scope>NUCLEOTIDE SEQUENCE [LARGE SCALE MRNA]</scope>
    <source>
        <strain>cv. Columbia</strain>
    </source>
</reference>
<reference key="5">
    <citation type="journal article" date="2013" name="PLoS Genet.">
        <title>MYB64 and MYB119 are required for cellularization and differentiation during female gametogenesis in Arabidopsis thaliana.</title>
        <authorList>
            <person name="Rabiger D.S."/>
            <person name="Drews G.N."/>
        </authorList>
    </citation>
    <scope>FUNCTION</scope>
    <scope>SUBCELLULAR LOCATION</scope>
    <scope>TISSUE SPECIFICITY</scope>
    <scope>DEVELOPMENTAL STAGE</scope>
    <scope>DISRUPTION PHENOTYPE</scope>
</reference>
<evidence type="ECO:0000255" key="1">
    <source>
        <dbReference type="PROSITE-ProRule" id="PRU00625"/>
    </source>
</evidence>
<evidence type="ECO:0000256" key="2">
    <source>
        <dbReference type="SAM" id="MobiDB-lite"/>
    </source>
</evidence>
<evidence type="ECO:0000269" key="3">
    <source>
    </source>
</evidence>
<evidence type="ECO:0000303" key="4">
    <source>
    </source>
</evidence>
<evidence type="ECO:0000305" key="5"/>
<evidence type="ECO:0000312" key="6">
    <source>
        <dbReference type="Araport" id="AT5G58850"/>
    </source>
</evidence>
<evidence type="ECO:0000312" key="7">
    <source>
        <dbReference type="EMBL" id="BAB09630.1"/>
    </source>
</evidence>
<feature type="chain" id="PRO_0000440861" description="Transcription factor MYB119">
    <location>
        <begin position="1"/>
        <end position="430"/>
    </location>
</feature>
<feature type="domain" description="HTH myb-type 1" evidence="1">
    <location>
        <begin position="100"/>
        <end position="155"/>
    </location>
</feature>
<feature type="domain" description="HTH myb-type 2" evidence="1">
    <location>
        <begin position="156"/>
        <end position="206"/>
    </location>
</feature>
<feature type="DNA-binding region" description="H-T-H motif" evidence="1">
    <location>
        <begin position="128"/>
        <end position="151"/>
    </location>
</feature>
<feature type="DNA-binding region" description="H-T-H motif" evidence="1">
    <location>
        <begin position="179"/>
        <end position="202"/>
    </location>
</feature>
<feature type="region of interest" description="Disordered" evidence="2">
    <location>
        <begin position="53"/>
        <end position="79"/>
    </location>
</feature>
<feature type="region of interest" description="Disordered" evidence="2">
    <location>
        <begin position="193"/>
        <end position="229"/>
    </location>
</feature>
<feature type="region of interest" description="Disordered" evidence="2">
    <location>
        <begin position="374"/>
        <end position="405"/>
    </location>
</feature>
<feature type="compositionally biased region" description="Basic residues" evidence="2">
    <location>
        <begin position="200"/>
        <end position="213"/>
    </location>
</feature>
<feature type="compositionally biased region" description="Basic and acidic residues" evidence="2">
    <location>
        <begin position="214"/>
        <end position="224"/>
    </location>
</feature>
<feature type="compositionally biased region" description="Low complexity" evidence="2">
    <location>
        <begin position="374"/>
        <end position="387"/>
    </location>
</feature>
<sequence>MEDRRLVHGAAPPLTAVERFLYGQKNDALCSKKQESSRDQPIVKTKISIETRSDNKENTTFGPTREKHLVLNGGNRNPTGEVVARSAARDYQNSTKKRSSKNLIKGQWTAEEDRKLIRLVRQHGERKWAMISEKLEGRAGKQCRERWHNHLRPDIKKDGWSEEEERVLVESHMRIGNKWAEIAKLIPGRTENSIKNHWNATKRRQNSKRKHKRESNADNNDRDASPSAKRPCILQDYIKSIERNNINKDNDEKKNENTISVISTPNLDQIYSDGDSASSILGGPYDEELDYFQNIFANHPISLENLGLSQTSDEVTQSSSSGFMIKNPNPNLHDSVGIHHQEATITAPANTPHLASDIYLSYLLNGTTSSYSDTHFPSSSSSTSSTTVEHGGHNEFLEPQANSTSERREMDLIEMLSGSIQGSNICFPLV</sequence>
<comment type="function">
    <text evidence="3">Transcription factor required for female gametophyte fertility. Acts redundantly with MYB64 to initiate the FG5 transition during female gametophyte development. The FG5 transition represents the switch between free nuclear divisions and cellularization-differentiation in female gametophyte, and occurs during developmental stage FG5.</text>
</comment>
<comment type="subcellular location">
    <subcellularLocation>
        <location evidence="1 3">Nucleus</location>
    </subcellularLocation>
</comment>
<comment type="tissue specificity">
    <text evidence="3">Expressed in ovary septum and stamen filament.</text>
</comment>
<comment type="developmental stage">
    <text evidence="3">During female gametogenesis, expressed in the female gametophyte at stage FG4 (four-nucleate stage) in all four nuclei. Expressed in the central cell in unfused polar nuclei at stage FG5 and secondary nucleus at stage FG6. Not expressed in mature female gametophytes (stage FG7).</text>
</comment>
<comment type="disruption phenotype">
    <text evidence="3">No visible phenotype under normal growth conditions, but in the double mutant plants myb64 and myb119 the female gametophytes fail to cellularize, resulting in enlarged coenocytes with supernumerary nuclei.</text>
</comment>
<comment type="sequence caution" evidence="5">
    <conflict type="erroneous termination">
        <sequence resource="EMBL-CDS" id="ABK28765"/>
    </conflict>
    <text>Extended C-terminus.</text>
</comment>
<name>MY119_ARATH</name>
<gene>
    <name evidence="4" type="primary">MYB119</name>
    <name evidence="6" type="ordered locus">At5g58850</name>
    <name evidence="7" type="ORF">K19M22.5</name>
</gene>
<proteinExistence type="evidence at transcript level"/>